<keyword id="KW-0456">Lyase</keyword>
<gene>
    <name type="ordered locus">GFO_1496</name>
</gene>
<evidence type="ECO:0000255" key="1">
    <source>
        <dbReference type="HAMAP-Rule" id="MF_00434"/>
    </source>
</evidence>
<dbReference type="EC" id="4.2.1.96" evidence="1"/>
<dbReference type="EMBL" id="CU207366">
    <property type="protein sequence ID" value="CAL66469.1"/>
    <property type="molecule type" value="Genomic_DNA"/>
</dbReference>
<dbReference type="SMR" id="A0M1H4"/>
<dbReference type="STRING" id="411154.GFO_1496"/>
<dbReference type="KEGG" id="gfo:GFO_1496"/>
<dbReference type="eggNOG" id="COG2154">
    <property type="taxonomic scope" value="Bacteria"/>
</dbReference>
<dbReference type="HOGENOM" id="CLU_081974_3_2_10"/>
<dbReference type="Proteomes" id="UP000000755">
    <property type="component" value="Chromosome"/>
</dbReference>
<dbReference type="GO" id="GO:0008124">
    <property type="term" value="F:4-alpha-hydroxytetrahydrobiopterin dehydratase activity"/>
    <property type="evidence" value="ECO:0007669"/>
    <property type="project" value="UniProtKB-UniRule"/>
</dbReference>
<dbReference type="GO" id="GO:0006729">
    <property type="term" value="P:tetrahydrobiopterin biosynthetic process"/>
    <property type="evidence" value="ECO:0007669"/>
    <property type="project" value="InterPro"/>
</dbReference>
<dbReference type="Gene3D" id="3.30.1360.20">
    <property type="entry name" value="Transcriptional coactivator/pterin dehydratase"/>
    <property type="match status" value="1"/>
</dbReference>
<dbReference type="HAMAP" id="MF_00434">
    <property type="entry name" value="Pterin_4_alpha"/>
    <property type="match status" value="1"/>
</dbReference>
<dbReference type="InterPro" id="IPR036428">
    <property type="entry name" value="PCD_sf"/>
</dbReference>
<dbReference type="InterPro" id="IPR001533">
    <property type="entry name" value="Pterin_deHydtase"/>
</dbReference>
<dbReference type="NCBIfam" id="NF002017">
    <property type="entry name" value="PRK00823.1-2"/>
    <property type="match status" value="1"/>
</dbReference>
<dbReference type="NCBIfam" id="NF002018">
    <property type="entry name" value="PRK00823.1-3"/>
    <property type="match status" value="1"/>
</dbReference>
<dbReference type="PANTHER" id="PTHR12599">
    <property type="entry name" value="PTERIN-4-ALPHA-CARBINOLAMINE DEHYDRATASE"/>
    <property type="match status" value="1"/>
</dbReference>
<dbReference type="PANTHER" id="PTHR12599:SF0">
    <property type="entry name" value="PTERIN-4-ALPHA-CARBINOLAMINE DEHYDRATASE"/>
    <property type="match status" value="1"/>
</dbReference>
<dbReference type="Pfam" id="PF01329">
    <property type="entry name" value="Pterin_4a"/>
    <property type="match status" value="1"/>
</dbReference>
<dbReference type="SUPFAM" id="SSF55248">
    <property type="entry name" value="PCD-like"/>
    <property type="match status" value="1"/>
</dbReference>
<name>PHS_CHRFK</name>
<accession>A0M1H4</accession>
<feature type="chain" id="PRO_1000072313" description="Putative pterin-4-alpha-carbinolamine dehydratase">
    <location>
        <begin position="1"/>
        <end position="97"/>
    </location>
</feature>
<reference key="1">
    <citation type="journal article" date="2006" name="Environ. Microbiol.">
        <title>Whole genome analysis of the marine Bacteroidetes'Gramella forsetii' reveals adaptations to degradation of polymeric organic matter.</title>
        <authorList>
            <person name="Bauer M."/>
            <person name="Kube M."/>
            <person name="Teeling H."/>
            <person name="Richter M."/>
            <person name="Lombardot T."/>
            <person name="Allers E."/>
            <person name="Wuerdemann C.A."/>
            <person name="Quast C."/>
            <person name="Kuhl H."/>
            <person name="Knaust F."/>
            <person name="Woebken D."/>
            <person name="Bischof K."/>
            <person name="Mussmann M."/>
            <person name="Choudhuri J.V."/>
            <person name="Meyer F."/>
            <person name="Reinhardt R."/>
            <person name="Amann R.I."/>
            <person name="Gloeckner F.O."/>
        </authorList>
    </citation>
    <scope>NUCLEOTIDE SEQUENCE [LARGE SCALE GENOMIC DNA]</scope>
    <source>
        <strain>DSM 17595 / CGMCC 1.15422 / KT0803</strain>
    </source>
</reference>
<organism>
    <name type="scientific">Christiangramia forsetii (strain DSM 17595 / CGMCC 1.15422 / KT0803)</name>
    <name type="common">Gramella forsetii</name>
    <dbReference type="NCBI Taxonomy" id="411154"/>
    <lineage>
        <taxon>Bacteria</taxon>
        <taxon>Pseudomonadati</taxon>
        <taxon>Bacteroidota</taxon>
        <taxon>Flavobacteriia</taxon>
        <taxon>Flavobacteriales</taxon>
        <taxon>Flavobacteriaceae</taxon>
        <taxon>Christiangramia</taxon>
    </lineage>
</organism>
<comment type="catalytic activity">
    <reaction evidence="1">
        <text>(4aS,6R)-4a-hydroxy-L-erythro-5,6,7,8-tetrahydrobiopterin = (6R)-L-erythro-6,7-dihydrobiopterin + H2O</text>
        <dbReference type="Rhea" id="RHEA:11920"/>
        <dbReference type="ChEBI" id="CHEBI:15377"/>
        <dbReference type="ChEBI" id="CHEBI:15642"/>
        <dbReference type="ChEBI" id="CHEBI:43120"/>
        <dbReference type="EC" id="4.2.1.96"/>
    </reaction>
</comment>
<comment type="similarity">
    <text evidence="1">Belongs to the pterin-4-alpha-carbinolamine dehydratase family.</text>
</comment>
<sequence length="97" mass="11285">MMNKLSEEEIQDKLKKFDGWTYAKKSIHTSFQFENFKEAFTVMTRIAFEAEAQQHHPNWGNVFNELEISLSTHDADGVTEKDFKLARAIEDIVESTN</sequence>
<protein>
    <recommendedName>
        <fullName evidence="1">Putative pterin-4-alpha-carbinolamine dehydratase</fullName>
        <shortName evidence="1">PHS</shortName>
        <ecNumber evidence="1">4.2.1.96</ecNumber>
    </recommendedName>
    <alternativeName>
        <fullName evidence="1">4-alpha-hydroxy-tetrahydropterin dehydratase</fullName>
    </alternativeName>
    <alternativeName>
        <fullName evidence="1">Pterin carbinolamine dehydratase</fullName>
        <shortName evidence="1">PCD</shortName>
    </alternativeName>
</protein>
<proteinExistence type="inferred from homology"/>